<name>Y4XI_SINFN</name>
<keyword id="KW-0963">Cytoplasm</keyword>
<keyword id="KW-0238">DNA-binding</keyword>
<keyword id="KW-0597">Phosphoprotein</keyword>
<keyword id="KW-0614">Plasmid</keyword>
<keyword id="KW-1185">Reference proteome</keyword>
<keyword id="KW-0804">Transcription</keyword>
<keyword id="KW-0805">Transcription regulation</keyword>
<keyword id="KW-0902">Two-component regulatory system</keyword>
<reference key="1">
    <citation type="journal article" date="1997" name="Nature">
        <title>Molecular basis of symbiosis between Rhizobium and legumes.</title>
        <authorList>
            <person name="Freiberg C.A."/>
            <person name="Fellay R."/>
            <person name="Bairoch A."/>
            <person name="Broughton W.J."/>
            <person name="Rosenthal A."/>
            <person name="Perret X."/>
        </authorList>
    </citation>
    <scope>NUCLEOTIDE SEQUENCE [LARGE SCALE GENOMIC DNA]</scope>
    <source>
        <strain>NBRC 101917 / NGR234</strain>
    </source>
</reference>
<reference key="2">
    <citation type="journal article" date="2009" name="Appl. Environ. Microbiol.">
        <title>Rhizobium sp. strain NGR234 possesses a remarkable number of secretion systems.</title>
        <authorList>
            <person name="Schmeisser C."/>
            <person name="Liesegang H."/>
            <person name="Krysciak D."/>
            <person name="Bakkou N."/>
            <person name="Le Quere A."/>
            <person name="Wollherr A."/>
            <person name="Heinemeyer I."/>
            <person name="Morgenstern B."/>
            <person name="Pommerening-Roeser A."/>
            <person name="Flores M."/>
            <person name="Palacios R."/>
            <person name="Brenner S."/>
            <person name="Gottschalk G."/>
            <person name="Schmitz R.A."/>
            <person name="Broughton W.J."/>
            <person name="Perret X."/>
            <person name="Strittmatter A.W."/>
            <person name="Streit W.R."/>
        </authorList>
    </citation>
    <scope>NUCLEOTIDE SEQUENCE [LARGE SCALE GENOMIC DNA]</scope>
    <source>
        <strain>NBRC 101917 / NGR234</strain>
    </source>
</reference>
<evidence type="ECO:0000255" key="1"/>
<evidence type="ECO:0000255" key="2">
    <source>
        <dbReference type="PROSITE-ProRule" id="PRU00169"/>
    </source>
</evidence>
<evidence type="ECO:0000255" key="3">
    <source>
        <dbReference type="PROSITE-ProRule" id="PRU01091"/>
    </source>
</evidence>
<evidence type="ECO:0000305" key="4"/>
<feature type="chain" id="PRO_0000081403" description="Probable transcriptional regulatory protein y4xI">
    <location>
        <begin position="1"/>
        <end position="226"/>
    </location>
</feature>
<feature type="domain" description="Response regulatory" evidence="2">
    <location>
        <begin position="1"/>
        <end position="114"/>
    </location>
</feature>
<feature type="DNA-binding region" description="OmpR/PhoB-type" evidence="3">
    <location>
        <begin position="122"/>
        <end position="220"/>
    </location>
</feature>
<feature type="site" description="Ancestral phosphorylation site" evidence="1">
    <location>
        <position position="49"/>
    </location>
</feature>
<gene>
    <name type="ordered locus">NGR_a00800</name>
    <name type="ORF">y4xI</name>
</gene>
<comment type="subcellular location">
    <subcellularLocation>
        <location evidence="4">Cytoplasm</location>
    </subcellularLocation>
</comment>
<comment type="caution">
    <text evidence="4">The conserved putative phosphorylation site is a Glu instead of an Asp.</text>
</comment>
<accession>P55701</accession>
<geneLocation type="plasmid">
    <name>sym pNGR234a</name>
</geneLocation>
<protein>
    <recommendedName>
        <fullName>Probable transcriptional regulatory protein y4xI</fullName>
    </recommendedName>
</protein>
<sequence>MRTLLVDTDLTRAVRGALGDGGFAVDVVGTLEQASSAFFSASYEILLLELVLPDGDGLDWLRQLRSDGYSVPAVIMSRLDDLEKRISVFNSGADDFLRKPVSTDELIARMRALLRRSTQITCPIIEFGNLHFDPIGRQVSVDGHPLMIARRELCILEHLLNRAGRIVPRARLEDQLYSFNDEVSGNALEAGIYRLRGYLSRSGATLRIRTVRGIGYTLELTDASSA</sequence>
<dbReference type="EMBL" id="U00090">
    <property type="protein sequence ID" value="AAB91932.1"/>
    <property type="molecule type" value="Genomic_DNA"/>
</dbReference>
<dbReference type="RefSeq" id="NP_444145.1">
    <property type="nucleotide sequence ID" value="NC_000914.2"/>
</dbReference>
<dbReference type="RefSeq" id="WP_010875121.1">
    <property type="nucleotide sequence ID" value="NC_000914.2"/>
</dbReference>
<dbReference type="SMR" id="P55701"/>
<dbReference type="KEGG" id="rhi:NGR_a00800"/>
<dbReference type="PATRIC" id="fig|394.7.peg.70"/>
<dbReference type="eggNOG" id="COG0745">
    <property type="taxonomic scope" value="Bacteria"/>
</dbReference>
<dbReference type="HOGENOM" id="CLU_000445_30_1_5"/>
<dbReference type="OrthoDB" id="9802426at2"/>
<dbReference type="Proteomes" id="UP000001054">
    <property type="component" value="Plasmid pNGR234a"/>
</dbReference>
<dbReference type="GO" id="GO:0005829">
    <property type="term" value="C:cytosol"/>
    <property type="evidence" value="ECO:0007669"/>
    <property type="project" value="TreeGrafter"/>
</dbReference>
<dbReference type="GO" id="GO:0032993">
    <property type="term" value="C:protein-DNA complex"/>
    <property type="evidence" value="ECO:0007669"/>
    <property type="project" value="TreeGrafter"/>
</dbReference>
<dbReference type="GO" id="GO:0000156">
    <property type="term" value="F:phosphorelay response regulator activity"/>
    <property type="evidence" value="ECO:0007669"/>
    <property type="project" value="TreeGrafter"/>
</dbReference>
<dbReference type="GO" id="GO:0000976">
    <property type="term" value="F:transcription cis-regulatory region binding"/>
    <property type="evidence" value="ECO:0007669"/>
    <property type="project" value="TreeGrafter"/>
</dbReference>
<dbReference type="GO" id="GO:0006355">
    <property type="term" value="P:regulation of DNA-templated transcription"/>
    <property type="evidence" value="ECO:0007669"/>
    <property type="project" value="InterPro"/>
</dbReference>
<dbReference type="CDD" id="cd00383">
    <property type="entry name" value="trans_reg_C"/>
    <property type="match status" value="1"/>
</dbReference>
<dbReference type="Gene3D" id="3.40.50.2300">
    <property type="match status" value="1"/>
</dbReference>
<dbReference type="Gene3D" id="1.10.10.10">
    <property type="entry name" value="Winged helix-like DNA-binding domain superfamily/Winged helix DNA-binding domain"/>
    <property type="match status" value="1"/>
</dbReference>
<dbReference type="InterPro" id="IPR011006">
    <property type="entry name" value="CheY-like_superfamily"/>
</dbReference>
<dbReference type="InterPro" id="IPR001867">
    <property type="entry name" value="OmpR/PhoB-type_DNA-bd"/>
</dbReference>
<dbReference type="InterPro" id="IPR001789">
    <property type="entry name" value="Sig_transdc_resp-reg_receiver"/>
</dbReference>
<dbReference type="InterPro" id="IPR039420">
    <property type="entry name" value="WalR-like"/>
</dbReference>
<dbReference type="InterPro" id="IPR036388">
    <property type="entry name" value="WH-like_DNA-bd_sf"/>
</dbReference>
<dbReference type="PANTHER" id="PTHR48111">
    <property type="entry name" value="REGULATOR OF RPOS"/>
    <property type="match status" value="1"/>
</dbReference>
<dbReference type="PANTHER" id="PTHR48111:SF36">
    <property type="entry name" value="TRANSCRIPTIONAL REGULATORY PROTEIN CUTR"/>
    <property type="match status" value="1"/>
</dbReference>
<dbReference type="Pfam" id="PF00072">
    <property type="entry name" value="Response_reg"/>
    <property type="match status" value="1"/>
</dbReference>
<dbReference type="Pfam" id="PF00486">
    <property type="entry name" value="Trans_reg_C"/>
    <property type="match status" value="1"/>
</dbReference>
<dbReference type="SMART" id="SM00448">
    <property type="entry name" value="REC"/>
    <property type="match status" value="1"/>
</dbReference>
<dbReference type="SMART" id="SM00862">
    <property type="entry name" value="Trans_reg_C"/>
    <property type="match status" value="1"/>
</dbReference>
<dbReference type="SUPFAM" id="SSF52172">
    <property type="entry name" value="CheY-like"/>
    <property type="match status" value="1"/>
</dbReference>
<dbReference type="PROSITE" id="PS51755">
    <property type="entry name" value="OMPR_PHOB"/>
    <property type="match status" value="1"/>
</dbReference>
<dbReference type="PROSITE" id="PS50110">
    <property type="entry name" value="RESPONSE_REGULATORY"/>
    <property type="match status" value="1"/>
</dbReference>
<organism>
    <name type="scientific">Sinorhizobium fredii (strain NBRC 101917 / NGR234)</name>
    <dbReference type="NCBI Taxonomy" id="394"/>
    <lineage>
        <taxon>Bacteria</taxon>
        <taxon>Pseudomonadati</taxon>
        <taxon>Pseudomonadota</taxon>
        <taxon>Alphaproteobacteria</taxon>
        <taxon>Hyphomicrobiales</taxon>
        <taxon>Rhizobiaceae</taxon>
        <taxon>Sinorhizobium/Ensifer group</taxon>
        <taxon>Sinorhizobium</taxon>
    </lineage>
</organism>
<proteinExistence type="predicted"/>